<reference key="1">
    <citation type="journal article" date="1999" name="Curr. Biol.">
        <title>Recurrent paralogy in the evolution of archaeal chaperonins.</title>
        <authorList>
            <person name="Archibald J.M."/>
            <person name="Logsdon J.M. Jr."/>
            <person name="Doolittle W.F."/>
        </authorList>
    </citation>
    <scope>NUCLEOTIDE SEQUENCE [GENOMIC DNA]</scope>
    <source>
        <strain>ATCC 35092 / DSM 1617 / JCM 11322 / P2</strain>
    </source>
</reference>
<reference key="2">
    <citation type="journal article" date="2001" name="Proc. Natl. Acad. Sci. U.S.A.">
        <title>The complete genome of the crenarchaeon Sulfolobus solfataricus P2.</title>
        <authorList>
            <person name="She Q."/>
            <person name="Singh R.K."/>
            <person name="Confalonieri F."/>
            <person name="Zivanovic Y."/>
            <person name="Allard G."/>
            <person name="Awayez M.J."/>
            <person name="Chan-Weiher C.C.-Y."/>
            <person name="Clausen I.G."/>
            <person name="Curtis B.A."/>
            <person name="De Moors A."/>
            <person name="Erauso G."/>
            <person name="Fletcher C."/>
            <person name="Gordon P.M.K."/>
            <person name="Heikamp-de Jong I."/>
            <person name="Jeffries A.C."/>
            <person name="Kozera C.J."/>
            <person name="Medina N."/>
            <person name="Peng X."/>
            <person name="Thi-Ngoc H.P."/>
            <person name="Redder P."/>
            <person name="Schenk M.E."/>
            <person name="Theriault C."/>
            <person name="Tolstrup N."/>
            <person name="Charlebois R.L."/>
            <person name="Doolittle W.F."/>
            <person name="Duguet M."/>
            <person name="Gaasterland T."/>
            <person name="Garrett R.A."/>
            <person name="Ragan M.A."/>
            <person name="Sensen C.W."/>
            <person name="Van der Oost J."/>
        </authorList>
    </citation>
    <scope>NUCLEOTIDE SEQUENCE [LARGE SCALE GENOMIC DNA]</scope>
    <source>
        <strain>ATCC 35092 / DSM 1617 / JCM 11322 / P2</strain>
    </source>
</reference>
<dbReference type="EMBL" id="AF181261">
    <property type="protein sequence ID" value="AAD56682.1"/>
    <property type="molecule type" value="Genomic_DNA"/>
</dbReference>
<dbReference type="EMBL" id="AE006641">
    <property type="protein sequence ID" value="AAK41152.1"/>
    <property type="molecule type" value="Genomic_DNA"/>
</dbReference>
<dbReference type="PIR" id="A99237">
    <property type="entry name" value="A99237"/>
</dbReference>
<dbReference type="RefSeq" id="WP_009992283.1">
    <property type="nucleotide sequence ID" value="NC_002754.1"/>
</dbReference>
<dbReference type="PDB" id="4XCG">
    <property type="method" value="X-ray"/>
    <property type="resolution" value="3.74 A"/>
    <property type="chains" value="A=1-559"/>
</dbReference>
<dbReference type="PDB" id="4XCI">
    <property type="method" value="X-ray"/>
    <property type="resolution" value="3.00 A"/>
    <property type="chains" value="A=1-559"/>
</dbReference>
<dbReference type="PDBsum" id="4XCG"/>
<dbReference type="PDBsum" id="4XCI"/>
<dbReference type="SMR" id="Q9V2S9"/>
<dbReference type="DIP" id="DIP-61906N"/>
<dbReference type="FunCoup" id="Q9V2S9">
    <property type="interactions" value="270"/>
</dbReference>
<dbReference type="IntAct" id="Q9V2S9">
    <property type="interactions" value="2"/>
</dbReference>
<dbReference type="STRING" id="273057.SSO0862"/>
<dbReference type="PaxDb" id="273057-SSO0862"/>
<dbReference type="EnsemblBacteria" id="AAK41152">
    <property type="protein sequence ID" value="AAK41152"/>
    <property type="gene ID" value="SSO0862"/>
</dbReference>
<dbReference type="GeneID" id="44129799"/>
<dbReference type="KEGG" id="sso:SSO0862"/>
<dbReference type="PATRIC" id="fig|273057.12.peg.873"/>
<dbReference type="eggNOG" id="arCOG01257">
    <property type="taxonomic scope" value="Archaea"/>
</dbReference>
<dbReference type="HOGENOM" id="CLU_008891_7_3_2"/>
<dbReference type="InParanoid" id="Q9V2S9"/>
<dbReference type="PhylomeDB" id="Q9V2S9"/>
<dbReference type="EvolutionaryTrace" id="Q9V2S9"/>
<dbReference type="Proteomes" id="UP000001974">
    <property type="component" value="Chromosome"/>
</dbReference>
<dbReference type="GO" id="GO:0005524">
    <property type="term" value="F:ATP binding"/>
    <property type="evidence" value="ECO:0007669"/>
    <property type="project" value="UniProtKB-KW"/>
</dbReference>
<dbReference type="GO" id="GO:0016887">
    <property type="term" value="F:ATP hydrolysis activity"/>
    <property type="evidence" value="ECO:0007669"/>
    <property type="project" value="InterPro"/>
</dbReference>
<dbReference type="GO" id="GO:0140662">
    <property type="term" value="F:ATP-dependent protein folding chaperone"/>
    <property type="evidence" value="ECO:0007669"/>
    <property type="project" value="InterPro"/>
</dbReference>
<dbReference type="GO" id="GO:0051082">
    <property type="term" value="F:unfolded protein binding"/>
    <property type="evidence" value="ECO:0000318"/>
    <property type="project" value="GO_Central"/>
</dbReference>
<dbReference type="GO" id="GO:0006457">
    <property type="term" value="P:protein folding"/>
    <property type="evidence" value="ECO:0000318"/>
    <property type="project" value="GO_Central"/>
</dbReference>
<dbReference type="CDD" id="cd03343">
    <property type="entry name" value="cpn60"/>
    <property type="match status" value="1"/>
</dbReference>
<dbReference type="Gene3D" id="3.50.7.10">
    <property type="entry name" value="GroEL"/>
    <property type="match status" value="1"/>
</dbReference>
<dbReference type="Gene3D" id="1.10.560.10">
    <property type="entry name" value="GroEL-like equatorial domain"/>
    <property type="match status" value="1"/>
</dbReference>
<dbReference type="Gene3D" id="3.30.260.10">
    <property type="entry name" value="TCP-1-like chaperonin intermediate domain"/>
    <property type="match status" value="1"/>
</dbReference>
<dbReference type="InterPro" id="IPR017998">
    <property type="entry name" value="Chaperone_TCP-1"/>
</dbReference>
<dbReference type="InterPro" id="IPR002194">
    <property type="entry name" value="Chaperonin_TCP-1_CS"/>
</dbReference>
<dbReference type="InterPro" id="IPR002423">
    <property type="entry name" value="Cpn60/GroEL/TCP-1"/>
</dbReference>
<dbReference type="InterPro" id="IPR027409">
    <property type="entry name" value="GroEL-like_apical_dom_sf"/>
</dbReference>
<dbReference type="InterPro" id="IPR027413">
    <property type="entry name" value="GROEL-like_equatorial_sf"/>
</dbReference>
<dbReference type="InterPro" id="IPR027410">
    <property type="entry name" value="TCP-1-like_intermed_sf"/>
</dbReference>
<dbReference type="InterPro" id="IPR053374">
    <property type="entry name" value="TCP-1_chaperonin"/>
</dbReference>
<dbReference type="InterPro" id="IPR054827">
    <property type="entry name" value="thermosome_alpha"/>
</dbReference>
<dbReference type="InterPro" id="IPR012714">
    <property type="entry name" value="Thermosome_arc"/>
</dbReference>
<dbReference type="NCBIfam" id="NF041082">
    <property type="entry name" value="thermosome_alpha"/>
    <property type="match status" value="1"/>
</dbReference>
<dbReference type="NCBIfam" id="TIGR02339">
    <property type="entry name" value="thermosome_arch"/>
    <property type="match status" value="1"/>
</dbReference>
<dbReference type="NCBIfam" id="NF041083">
    <property type="entry name" value="thermosome_beta"/>
    <property type="match status" value="1"/>
</dbReference>
<dbReference type="PANTHER" id="PTHR11353">
    <property type="entry name" value="CHAPERONIN"/>
    <property type="match status" value="1"/>
</dbReference>
<dbReference type="Pfam" id="PF00118">
    <property type="entry name" value="Cpn60_TCP1"/>
    <property type="match status" value="1"/>
</dbReference>
<dbReference type="PRINTS" id="PR00304">
    <property type="entry name" value="TCOMPLEXTCP1"/>
</dbReference>
<dbReference type="SUPFAM" id="SSF52029">
    <property type="entry name" value="GroEL apical domain-like"/>
    <property type="match status" value="1"/>
</dbReference>
<dbReference type="SUPFAM" id="SSF48592">
    <property type="entry name" value="GroEL equatorial domain-like"/>
    <property type="match status" value="1"/>
</dbReference>
<dbReference type="SUPFAM" id="SSF54849">
    <property type="entry name" value="GroEL-intermediate domain like"/>
    <property type="match status" value="1"/>
</dbReference>
<dbReference type="PROSITE" id="PS00750">
    <property type="entry name" value="TCP1_1"/>
    <property type="match status" value="1"/>
</dbReference>
<dbReference type="PROSITE" id="PS00751">
    <property type="entry name" value="TCP1_2"/>
    <property type="match status" value="1"/>
</dbReference>
<dbReference type="PROSITE" id="PS00995">
    <property type="entry name" value="TCP1_3"/>
    <property type="match status" value="1"/>
</dbReference>
<organism>
    <name type="scientific">Saccharolobus solfataricus (strain ATCC 35092 / DSM 1617 / JCM 11322 / P2)</name>
    <name type="common">Sulfolobus solfataricus</name>
    <dbReference type="NCBI Taxonomy" id="273057"/>
    <lineage>
        <taxon>Archaea</taxon>
        <taxon>Thermoproteota</taxon>
        <taxon>Thermoprotei</taxon>
        <taxon>Sulfolobales</taxon>
        <taxon>Sulfolobaceae</taxon>
        <taxon>Saccharolobus</taxon>
    </lineage>
</organism>
<evidence type="ECO:0000250" key="1"/>
<evidence type="ECO:0000256" key="2">
    <source>
        <dbReference type="SAM" id="MobiDB-lite"/>
    </source>
</evidence>
<evidence type="ECO:0000305" key="3"/>
<evidence type="ECO:0007829" key="4">
    <source>
        <dbReference type="PDB" id="4XCI"/>
    </source>
</evidence>
<keyword id="KW-0002">3D-structure</keyword>
<keyword id="KW-0067">ATP-binding</keyword>
<keyword id="KW-0143">Chaperone</keyword>
<keyword id="KW-0547">Nucleotide-binding</keyword>
<keyword id="KW-1185">Reference proteome</keyword>
<proteinExistence type="evidence at protein level"/>
<name>THSA_SACS2</name>
<comment type="function">
    <text evidence="1">Molecular chaperone; binds unfolded polypeptides in vitro, and has a weak ATPase activity.</text>
</comment>
<comment type="subunit">
    <text evidence="1">Forms a Heterooligomeric complex of two stacked eight-membered rings.</text>
</comment>
<comment type="interaction">
    <interactant intactId="EBI-16195227">
        <id>Q9V2S9</id>
    </interactant>
    <interactant intactId="EBI-16195251">
        <id>Q9V2T8</id>
        <label>thsB</label>
    </interactant>
    <organismsDiffer>false</organismsDiffer>
    <experiments>7</experiments>
</comment>
<comment type="similarity">
    <text evidence="3">Belongs to the TCP-1 chaperonin family.</text>
</comment>
<gene>
    <name type="primary">thsA</name>
    <name type="ordered locus">SSO0862</name>
</gene>
<accession>Q9V2S9</accession>
<protein>
    <recommendedName>
        <fullName>Thermosome subunit alpha</fullName>
    </recommendedName>
    <alternativeName>
        <fullName>Chaperonin subunit alpha</fullName>
    </alternativeName>
    <alternativeName>
        <fullName>Thermophilic factor 55 alpha</fullName>
        <shortName>TF55-alpha</shortName>
    </alternativeName>
    <alternativeName>
        <fullName>Thermosome subunit 1</fullName>
    </alternativeName>
</protein>
<sequence length="559" mass="59675">MAAPVLLLKEGTSRTTGRDALRNNILAAKTLAEMLRSSLGPKGLDKMLIDSFGDVTITNDGATIVKDMEIQHPAAKLLVEAAKAQDAEVGDGTTSAVVLAGALLEKAESLLDQNIHPTIIIEGYKKAYNKALELLPQLGTRIDIKDLNSSVARDTLRKIAFTTLASKFIAEGAELNKIIDMVIDAIVNVAEPLPNGGYNVSLDLIKIDKKKGGSIEDSVLVKGLVLDKEVVHPGMPRRVTKAKIAVLDAALEVEKPEISAKISITSPEQIKAFLDEESKYLKDMVDKLASIGANVVICQKGIDDIAQHFLAKKGILAVRRVKRSDIEKLEKALGARIISSIKDATPEDLGYAELVEERRVGNDKMVFIEGAKNLKAVNILLRGSNDMALDEAERSINDALHALRNILLEPVILPGGGAIELELAMKLREYARSVGGKEQLAIEAFADALEEIPLILAETAGLEAISSLMDLRARHAKGLSNTGVDVIGGKIVDDVYALNIIEPIRVKSQVLKSATEAATAILKIDDLIAAAPLKSEKKGGEGSKEESGGEGGSTPSLGD</sequence>
<feature type="chain" id="PRO_0000128401" description="Thermosome subunit alpha">
    <location>
        <begin position="1"/>
        <end position="559"/>
    </location>
</feature>
<feature type="region of interest" description="Disordered" evidence="2">
    <location>
        <begin position="535"/>
        <end position="559"/>
    </location>
</feature>
<feature type="compositionally biased region" description="Basic and acidic residues" evidence="2">
    <location>
        <begin position="535"/>
        <end position="547"/>
    </location>
</feature>
<feature type="sequence conflict" description="In Ref. 1; AAD56682." evidence="3" ref="1">
    <original>T</original>
    <variation>A</variation>
    <location>
        <position position="30"/>
    </location>
</feature>
<feature type="sequence conflict" description="In Ref. 1; AAD56682." evidence="3" ref="1">
    <original>M</original>
    <variation>R</variation>
    <location>
        <position position="34"/>
    </location>
</feature>
<feature type="helix" evidence="4">
    <location>
        <begin position="19"/>
        <end position="36"/>
    </location>
</feature>
<feature type="strand" evidence="4">
    <location>
        <begin position="46"/>
        <end position="49"/>
    </location>
</feature>
<feature type="strand" evidence="4">
    <location>
        <begin position="55"/>
        <end position="58"/>
    </location>
</feature>
<feature type="helix" evidence="4">
    <location>
        <begin position="61"/>
        <end position="67"/>
    </location>
</feature>
<feature type="helix" evidence="4">
    <location>
        <begin position="73"/>
        <end position="88"/>
    </location>
</feature>
<feature type="strand" evidence="4">
    <location>
        <begin position="89"/>
        <end position="91"/>
    </location>
</feature>
<feature type="helix" evidence="4">
    <location>
        <begin position="93"/>
        <end position="112"/>
    </location>
</feature>
<feature type="helix" evidence="4">
    <location>
        <begin position="117"/>
        <end position="138"/>
    </location>
</feature>
<feature type="turn" evidence="4">
    <location>
        <begin position="149"/>
        <end position="151"/>
    </location>
</feature>
<feature type="helix" evidence="4">
    <location>
        <begin position="154"/>
        <end position="164"/>
    </location>
</feature>
<feature type="helix" evidence="4">
    <location>
        <begin position="179"/>
        <end position="187"/>
    </location>
</feature>
<feature type="turn" evidence="4">
    <location>
        <begin position="194"/>
        <end position="196"/>
    </location>
</feature>
<feature type="helix" evidence="4">
    <location>
        <begin position="396"/>
        <end position="408"/>
    </location>
</feature>
<feature type="strand" evidence="4">
    <location>
        <begin position="412"/>
        <end position="414"/>
    </location>
</feature>
<feature type="turn" evidence="4">
    <location>
        <begin position="415"/>
        <end position="417"/>
    </location>
</feature>
<feature type="helix" evidence="4">
    <location>
        <begin position="418"/>
        <end position="434"/>
    </location>
</feature>
<feature type="helix" evidence="4">
    <location>
        <begin position="437"/>
        <end position="449"/>
    </location>
</feature>
<feature type="helix" evidence="4">
    <location>
        <begin position="451"/>
        <end position="460"/>
    </location>
</feature>
<feature type="helix" evidence="4">
    <location>
        <begin position="464"/>
        <end position="476"/>
    </location>
</feature>
<feature type="strand" evidence="4">
    <location>
        <begin position="483"/>
        <end position="485"/>
    </location>
</feature>
<feature type="turn" evidence="4">
    <location>
        <begin position="486"/>
        <end position="489"/>
    </location>
</feature>
<feature type="strand" evidence="4">
    <location>
        <begin position="490"/>
        <end position="493"/>
    </location>
</feature>
<feature type="turn" evidence="4">
    <location>
        <begin position="495"/>
        <end position="499"/>
    </location>
</feature>
<feature type="strand" evidence="4">
    <location>
        <begin position="501"/>
        <end position="503"/>
    </location>
</feature>
<feature type="helix" evidence="4">
    <location>
        <begin position="504"/>
        <end position="523"/>
    </location>
</feature>
<feature type="strand" evidence="4">
    <location>
        <begin position="524"/>
        <end position="529"/>
    </location>
</feature>